<feature type="chain" id="PRO_0000331745" description="Homeobox-leucine zipper protein ROC7">
    <location>
        <begin position="1"/>
        <end position="749"/>
    </location>
</feature>
<feature type="domain" description="START" evidence="4">
    <location>
        <begin position="256"/>
        <end position="494"/>
    </location>
</feature>
<feature type="DNA-binding region" description="Homeobox" evidence="3">
    <location>
        <begin position="88"/>
        <end position="147"/>
    </location>
</feature>
<feature type="region of interest" description="Disordered" evidence="5">
    <location>
        <begin position="26"/>
        <end position="98"/>
    </location>
</feature>
<feature type="coiled-coil region" evidence="2">
    <location>
        <begin position="137"/>
        <end position="218"/>
    </location>
</feature>
<feature type="compositionally biased region" description="Basic and acidic residues" evidence="5">
    <location>
        <begin position="46"/>
        <end position="57"/>
    </location>
</feature>
<feature type="compositionally biased region" description="Gly residues" evidence="5">
    <location>
        <begin position="68"/>
        <end position="79"/>
    </location>
</feature>
<feature type="compositionally biased region" description="Basic residues" evidence="5">
    <location>
        <begin position="86"/>
        <end position="97"/>
    </location>
</feature>
<gene>
    <name type="primary">ROC7</name>
    <name type="synonym">GL2-7</name>
    <name type="ordered locus">Os08g0136100</name>
    <name type="ordered locus">Os08g0136000</name>
    <name type="ordered locus">LOC_Os08g04190</name>
    <name type="ORF">OJ1613_G04.7</name>
    <name type="ORF">OsJ_024924</name>
    <name type="ORF">P0680F05.46</name>
</gene>
<organism>
    <name type="scientific">Oryza sativa subsp. japonica</name>
    <name type="common">Rice</name>
    <dbReference type="NCBI Taxonomy" id="39947"/>
    <lineage>
        <taxon>Eukaryota</taxon>
        <taxon>Viridiplantae</taxon>
        <taxon>Streptophyta</taxon>
        <taxon>Embryophyta</taxon>
        <taxon>Tracheophyta</taxon>
        <taxon>Spermatophyta</taxon>
        <taxon>Magnoliopsida</taxon>
        <taxon>Liliopsida</taxon>
        <taxon>Poales</taxon>
        <taxon>Poaceae</taxon>
        <taxon>BOP clade</taxon>
        <taxon>Oryzoideae</taxon>
        <taxon>Oryzeae</taxon>
        <taxon>Oryzinae</taxon>
        <taxon>Oryza</taxon>
        <taxon>Oryza sativa</taxon>
    </lineage>
</organism>
<keyword id="KW-0175">Coiled coil</keyword>
<keyword id="KW-0238">DNA-binding</keyword>
<keyword id="KW-0371">Homeobox</keyword>
<keyword id="KW-0539">Nucleus</keyword>
<keyword id="KW-1185">Reference proteome</keyword>
<keyword id="KW-0804">Transcription</keyword>
<keyword id="KW-0805">Transcription regulation</keyword>
<reference key="1">
    <citation type="journal article" date="2005" name="Nature">
        <title>The map-based sequence of the rice genome.</title>
        <authorList>
            <consortium name="International rice genome sequencing project (IRGSP)"/>
        </authorList>
    </citation>
    <scope>NUCLEOTIDE SEQUENCE [LARGE SCALE GENOMIC DNA]</scope>
    <source>
        <strain>cv. Nipponbare</strain>
    </source>
</reference>
<reference key="2">
    <citation type="journal article" date="2008" name="Nucleic Acids Res.">
        <title>The rice annotation project database (RAP-DB): 2008 update.</title>
        <authorList>
            <consortium name="The rice annotation project (RAP)"/>
        </authorList>
    </citation>
    <scope>GENOME REANNOTATION</scope>
    <source>
        <strain>cv. Nipponbare</strain>
    </source>
</reference>
<reference key="3">
    <citation type="journal article" date="2013" name="Rice">
        <title>Improvement of the Oryza sativa Nipponbare reference genome using next generation sequence and optical map data.</title>
        <authorList>
            <person name="Kawahara Y."/>
            <person name="de la Bastide M."/>
            <person name="Hamilton J.P."/>
            <person name="Kanamori H."/>
            <person name="McCombie W.R."/>
            <person name="Ouyang S."/>
            <person name="Schwartz D.C."/>
            <person name="Tanaka T."/>
            <person name="Wu J."/>
            <person name="Zhou S."/>
            <person name="Childs K.L."/>
            <person name="Davidson R.M."/>
            <person name="Lin H."/>
            <person name="Quesada-Ocampo L."/>
            <person name="Vaillancourt B."/>
            <person name="Sakai H."/>
            <person name="Lee S.S."/>
            <person name="Kim J."/>
            <person name="Numa H."/>
            <person name="Itoh T."/>
            <person name="Buell C.R."/>
            <person name="Matsumoto T."/>
        </authorList>
    </citation>
    <scope>GENOME REANNOTATION</scope>
    <source>
        <strain>cv. Nipponbare</strain>
    </source>
</reference>
<reference key="4">
    <citation type="journal article" date="2005" name="PLoS Biol.">
        <title>The genomes of Oryza sativa: a history of duplications.</title>
        <authorList>
            <person name="Yu J."/>
            <person name="Wang J."/>
            <person name="Lin W."/>
            <person name="Li S."/>
            <person name="Li H."/>
            <person name="Zhou J."/>
            <person name="Ni P."/>
            <person name="Dong W."/>
            <person name="Hu S."/>
            <person name="Zeng C."/>
            <person name="Zhang J."/>
            <person name="Zhang Y."/>
            <person name="Li R."/>
            <person name="Xu Z."/>
            <person name="Li S."/>
            <person name="Li X."/>
            <person name="Zheng H."/>
            <person name="Cong L."/>
            <person name="Lin L."/>
            <person name="Yin J."/>
            <person name="Geng J."/>
            <person name="Li G."/>
            <person name="Shi J."/>
            <person name="Liu J."/>
            <person name="Lv H."/>
            <person name="Li J."/>
            <person name="Wang J."/>
            <person name="Deng Y."/>
            <person name="Ran L."/>
            <person name="Shi X."/>
            <person name="Wang X."/>
            <person name="Wu Q."/>
            <person name="Li C."/>
            <person name="Ren X."/>
            <person name="Wang J."/>
            <person name="Wang X."/>
            <person name="Li D."/>
            <person name="Liu D."/>
            <person name="Zhang X."/>
            <person name="Ji Z."/>
            <person name="Zhao W."/>
            <person name="Sun Y."/>
            <person name="Zhang Z."/>
            <person name="Bao J."/>
            <person name="Han Y."/>
            <person name="Dong L."/>
            <person name="Ji J."/>
            <person name="Chen P."/>
            <person name="Wu S."/>
            <person name="Liu J."/>
            <person name="Xiao Y."/>
            <person name="Bu D."/>
            <person name="Tan J."/>
            <person name="Yang L."/>
            <person name="Ye C."/>
            <person name="Zhang J."/>
            <person name="Xu J."/>
            <person name="Zhou Y."/>
            <person name="Yu Y."/>
            <person name="Zhang B."/>
            <person name="Zhuang S."/>
            <person name="Wei H."/>
            <person name="Liu B."/>
            <person name="Lei M."/>
            <person name="Yu H."/>
            <person name="Li Y."/>
            <person name="Xu H."/>
            <person name="Wei S."/>
            <person name="He X."/>
            <person name="Fang L."/>
            <person name="Zhang Z."/>
            <person name="Zhang Y."/>
            <person name="Huang X."/>
            <person name="Su Z."/>
            <person name="Tong W."/>
            <person name="Li J."/>
            <person name="Tong Z."/>
            <person name="Li S."/>
            <person name="Ye J."/>
            <person name="Wang L."/>
            <person name="Fang L."/>
            <person name="Lei T."/>
            <person name="Chen C.-S."/>
            <person name="Chen H.-C."/>
            <person name="Xu Z."/>
            <person name="Li H."/>
            <person name="Huang H."/>
            <person name="Zhang F."/>
            <person name="Xu H."/>
            <person name="Li N."/>
            <person name="Zhao C."/>
            <person name="Li S."/>
            <person name="Dong L."/>
            <person name="Huang Y."/>
            <person name="Li L."/>
            <person name="Xi Y."/>
            <person name="Qi Q."/>
            <person name="Li W."/>
            <person name="Zhang B."/>
            <person name="Hu W."/>
            <person name="Zhang Y."/>
            <person name="Tian X."/>
            <person name="Jiao Y."/>
            <person name="Liang X."/>
            <person name="Jin J."/>
            <person name="Gao L."/>
            <person name="Zheng W."/>
            <person name="Hao B."/>
            <person name="Liu S.-M."/>
            <person name="Wang W."/>
            <person name="Yuan L."/>
            <person name="Cao M."/>
            <person name="McDermott J."/>
            <person name="Samudrala R."/>
            <person name="Wang J."/>
            <person name="Wong G.K.-S."/>
            <person name="Yang H."/>
        </authorList>
    </citation>
    <scope>NUCLEOTIDE SEQUENCE [LARGE SCALE GENOMIC DNA]</scope>
    <source>
        <strain>cv. Nipponbare</strain>
    </source>
</reference>
<reference key="5">
    <citation type="submission" date="2003-01" db="EMBL/GenBank/DDBJ databases">
        <title>The roles of rice GL2-type homeobox genes in epidermis differentiation.</title>
        <authorList>
            <person name="Ito M."/>
            <person name="Sentoku N."/>
            <person name="Nishimura A."/>
            <person name="Hong S.-K."/>
            <person name="Sato Y."/>
            <person name="Matsuoka M."/>
        </authorList>
    </citation>
    <scope>NUCLEOTIDE SEQUENCE [MRNA] OF 88-217</scope>
</reference>
<name>ROC7_ORYSJ</name>
<sequence length="749" mass="80854">MQSLLDGHHHQLPSLLQQHHNGHHLLDQHQQHQHQLPPQATTTSESDGRAPRDELEMSKSGGSDNLESGGGGGGGGSGGDQDPNQRPRKKRYHRHTQHQIQELEAFFKECPHPDDKQRKELSRELGLEPLQVKFWFQNKRTQMKTQHERHENNALRAENEKLRAENMRYKEALANASCPNCGGPAAIGEMSFDEHHLRLENARLRDEIDRISAIAAKYVGKPAAAVSAAYPPLPPSNRSPLDHMGIPGAGADVFGADFDKPLVIELAVAAMEELVRMAQLGEPLWAPALGGEALGEEEYARTFPRGLGPKSPELRSEASRETAVVIMNHVSLVEMLMDVGQWTALFSSIVSRAATLEVLSTGVAGNHNGALQLMSAEFQMPSPLVPTRETQFLRYCKQHPDGTWAVVDVSLDGLRAGAGGGCQPAAARGHRRRPSGCLIQEMPNGYSKVTWVEHVEADDQMVHNLYKPVVNSGMAFGARRWVATLERQCERLASAMASNVASSGDAGVITTSEGRRSMLKLAERMVASFCGGVTASTTHQWTTLSGSGAEDVRVMTRKSVDDPGRPPGIILNAATSFWLPVPPSRVFDFLRDDSTRSEWDILSNGGVVQEMAHIANGRDHGNAVSLLRVNNANSNQSNMLILQECCTDATGSYVIYAPVDVVAMNVVLNGGDPDYVALLPSGFAILPDGPDGGGGSLLTVAFQILVDSVPTAKLSLGSVATVNSLIACTVERIKAAITGDNGVAPPCPR</sequence>
<dbReference type="EMBL" id="AP003896">
    <property type="protein sequence ID" value="BAD03062.1"/>
    <property type="status" value="ALT_SEQ"/>
    <property type="molecule type" value="Genomic_DNA"/>
</dbReference>
<dbReference type="EMBL" id="AP005620">
    <property type="protein sequence ID" value="BAD16310.1"/>
    <property type="status" value="ALT_SEQ"/>
    <property type="molecule type" value="Genomic_DNA"/>
</dbReference>
<dbReference type="EMBL" id="AP008214">
    <property type="protein sequence ID" value="BAF22861.1"/>
    <property type="status" value="ALT_SEQ"/>
    <property type="molecule type" value="Genomic_DNA"/>
</dbReference>
<dbReference type="EMBL" id="AP014964">
    <property type="status" value="NOT_ANNOTATED_CDS"/>
    <property type="molecule type" value="Genomic_DNA"/>
</dbReference>
<dbReference type="EMBL" id="CM000145">
    <property type="status" value="NOT_ANNOTATED_CDS"/>
    <property type="molecule type" value="Genomic_DNA"/>
</dbReference>
<dbReference type="EMBL" id="AB101650">
    <property type="protein sequence ID" value="BAC77160.1"/>
    <property type="molecule type" value="mRNA"/>
</dbReference>
<dbReference type="SMR" id="A3BPF2"/>
<dbReference type="FunCoup" id="A3BPF2">
    <property type="interactions" value="17"/>
</dbReference>
<dbReference type="STRING" id="39947.A3BPF2"/>
<dbReference type="PaxDb" id="39947-A3BPF2"/>
<dbReference type="KEGG" id="dosa:Os08g0136100"/>
<dbReference type="eggNOG" id="ENOG502QU3P">
    <property type="taxonomic scope" value="Eukaryota"/>
</dbReference>
<dbReference type="InParanoid" id="A3BPF2"/>
<dbReference type="Proteomes" id="UP000000763">
    <property type="component" value="Chromosome 8"/>
</dbReference>
<dbReference type="Proteomes" id="UP000007752">
    <property type="component" value="Chromosome 8"/>
</dbReference>
<dbReference type="Proteomes" id="UP000059680">
    <property type="component" value="Chromosome 8"/>
</dbReference>
<dbReference type="GO" id="GO:0005634">
    <property type="term" value="C:nucleus"/>
    <property type="evidence" value="ECO:0007669"/>
    <property type="project" value="UniProtKB-SubCell"/>
</dbReference>
<dbReference type="GO" id="GO:0003677">
    <property type="term" value="F:DNA binding"/>
    <property type="evidence" value="ECO:0007669"/>
    <property type="project" value="UniProtKB-KW"/>
</dbReference>
<dbReference type="GO" id="GO:0000981">
    <property type="term" value="F:DNA-binding transcription factor activity, RNA polymerase II-specific"/>
    <property type="evidence" value="ECO:0007669"/>
    <property type="project" value="InterPro"/>
</dbReference>
<dbReference type="GO" id="GO:0008289">
    <property type="term" value="F:lipid binding"/>
    <property type="evidence" value="ECO:0007669"/>
    <property type="project" value="InterPro"/>
</dbReference>
<dbReference type="CDD" id="cd00086">
    <property type="entry name" value="homeodomain"/>
    <property type="match status" value="1"/>
</dbReference>
<dbReference type="CDD" id="cd08875">
    <property type="entry name" value="START_ArGLABRA2_like"/>
    <property type="match status" value="1"/>
</dbReference>
<dbReference type="FunFam" id="3.30.530.20:FF:000026">
    <property type="entry name" value="Homeobox-leucine zipper protein GLABRA 2"/>
    <property type="match status" value="1"/>
</dbReference>
<dbReference type="FunFam" id="1.10.10.60:FF:000229">
    <property type="entry name" value="Homeobox-leucine zipper protein HDG1"/>
    <property type="match status" value="1"/>
</dbReference>
<dbReference type="Gene3D" id="3.30.530.20">
    <property type="match status" value="1"/>
</dbReference>
<dbReference type="Gene3D" id="1.10.10.60">
    <property type="entry name" value="Homeodomain-like"/>
    <property type="match status" value="1"/>
</dbReference>
<dbReference type="InterPro" id="IPR042160">
    <property type="entry name" value="GLABRA2/ANL2/PDF2/ATML1-like"/>
</dbReference>
<dbReference type="InterPro" id="IPR001356">
    <property type="entry name" value="HD"/>
</dbReference>
<dbReference type="InterPro" id="IPR017970">
    <property type="entry name" value="Homeobox_CS"/>
</dbReference>
<dbReference type="InterPro" id="IPR009057">
    <property type="entry name" value="Homeodomain-like_sf"/>
</dbReference>
<dbReference type="InterPro" id="IPR023393">
    <property type="entry name" value="START-like_dom_sf"/>
</dbReference>
<dbReference type="InterPro" id="IPR002913">
    <property type="entry name" value="START_lipid-bd_dom"/>
</dbReference>
<dbReference type="PANTHER" id="PTHR45654">
    <property type="entry name" value="HOMEOBOX-LEUCINE ZIPPER PROTEIN MERISTEM L1"/>
    <property type="match status" value="1"/>
</dbReference>
<dbReference type="PANTHER" id="PTHR45654:SF80">
    <property type="entry name" value="HOMEOBOX-LEUCINE ZIPPER PROTEIN ROC7"/>
    <property type="match status" value="1"/>
</dbReference>
<dbReference type="Pfam" id="PF00046">
    <property type="entry name" value="Homeodomain"/>
    <property type="match status" value="1"/>
</dbReference>
<dbReference type="Pfam" id="PF01852">
    <property type="entry name" value="START"/>
    <property type="match status" value="1"/>
</dbReference>
<dbReference type="SMART" id="SM00389">
    <property type="entry name" value="HOX"/>
    <property type="match status" value="1"/>
</dbReference>
<dbReference type="SMART" id="SM00234">
    <property type="entry name" value="START"/>
    <property type="match status" value="1"/>
</dbReference>
<dbReference type="SUPFAM" id="SSF55961">
    <property type="entry name" value="Bet v1-like"/>
    <property type="match status" value="2"/>
</dbReference>
<dbReference type="SUPFAM" id="SSF46689">
    <property type="entry name" value="Homeodomain-like"/>
    <property type="match status" value="1"/>
</dbReference>
<dbReference type="PROSITE" id="PS00027">
    <property type="entry name" value="HOMEOBOX_1"/>
    <property type="match status" value="1"/>
</dbReference>
<dbReference type="PROSITE" id="PS50071">
    <property type="entry name" value="HOMEOBOX_2"/>
    <property type="match status" value="1"/>
</dbReference>
<dbReference type="PROSITE" id="PS50848">
    <property type="entry name" value="START"/>
    <property type="match status" value="1"/>
</dbReference>
<evidence type="ECO:0000250" key="1"/>
<evidence type="ECO:0000255" key="2"/>
<evidence type="ECO:0000255" key="3">
    <source>
        <dbReference type="PROSITE-ProRule" id="PRU00108"/>
    </source>
</evidence>
<evidence type="ECO:0000255" key="4">
    <source>
        <dbReference type="PROSITE-ProRule" id="PRU00197"/>
    </source>
</evidence>
<evidence type="ECO:0000256" key="5">
    <source>
        <dbReference type="SAM" id="MobiDB-lite"/>
    </source>
</evidence>
<evidence type="ECO:0000305" key="6"/>
<comment type="function">
    <text evidence="1">Probable transcription factor.</text>
</comment>
<comment type="subcellular location">
    <subcellularLocation>
        <location evidence="6">Nucleus</location>
    </subcellularLocation>
</comment>
<comment type="similarity">
    <text evidence="6">Belongs to the HD-ZIP homeobox family. Class IV subfamily.</text>
</comment>
<comment type="sequence caution" evidence="6">
    <conflict type="erroneous gene model prediction">
        <sequence resource="EMBL-CDS" id="BAD03062"/>
    </conflict>
</comment>
<comment type="sequence caution" evidence="6">
    <conflict type="erroneous gene model prediction">
        <sequence resource="EMBL-CDS" id="BAD16310"/>
    </conflict>
</comment>
<comment type="sequence caution" evidence="6">
    <conflict type="erroneous gene model prediction">
        <sequence resource="EMBL-CDS" id="BAF22861"/>
    </conflict>
</comment>
<protein>
    <recommendedName>
        <fullName>Homeobox-leucine zipper protein ROC7</fullName>
    </recommendedName>
    <alternativeName>
        <fullName>GLABRA 2-like homeobox protein 7</fullName>
    </alternativeName>
    <alternativeName>
        <fullName>HD-ZIP protein ROC7</fullName>
    </alternativeName>
    <alternativeName>
        <fullName>Homeodomain transcription factor ROC7</fullName>
    </alternativeName>
    <alternativeName>
        <fullName>Protein RICE OUTERMOST CELL-SPECIFIC 7</fullName>
    </alternativeName>
</protein>
<accession>A3BPF2</accession>
<accession>Q0J854</accession>
<accession>Q0J855</accession>
<accession>Q6YYB8</accession>
<accession>Q7Y0V6</accession>
<proteinExistence type="evidence at transcript level"/>